<reference key="1">
    <citation type="submission" date="2006-06" db="EMBL/GenBank/DDBJ databases">
        <title>Complete sequence of chromosome of Mycobacterium sp. MCS.</title>
        <authorList>
            <consortium name="US DOE Joint Genome Institute"/>
            <person name="Copeland A."/>
            <person name="Lucas S."/>
            <person name="Lapidus A."/>
            <person name="Barry K."/>
            <person name="Detter J.C."/>
            <person name="Glavina del Rio T."/>
            <person name="Hammon N."/>
            <person name="Israni S."/>
            <person name="Dalin E."/>
            <person name="Tice H."/>
            <person name="Pitluck S."/>
            <person name="Martinez M."/>
            <person name="Schmutz J."/>
            <person name="Larimer F."/>
            <person name="Land M."/>
            <person name="Hauser L."/>
            <person name="Kyrpides N."/>
            <person name="Kim E."/>
            <person name="Miller C.D."/>
            <person name="Hughes J.E."/>
            <person name="Anderson A.J."/>
            <person name="Sims R.C."/>
            <person name="Richardson P."/>
        </authorList>
    </citation>
    <scope>NUCLEOTIDE SEQUENCE [LARGE SCALE GENOMIC DNA]</scope>
    <source>
        <strain>MCS</strain>
    </source>
</reference>
<evidence type="ECO:0000255" key="1">
    <source>
        <dbReference type="HAMAP-Rule" id="MF_00300"/>
    </source>
</evidence>
<comment type="function">
    <text evidence="1">Catalyzes the anti-1,4-elimination of the C-3 phosphate and the C-6 proR hydrogen from 5-enolpyruvylshikimate-3-phosphate (EPSP) to yield chorismate, which is the branch point compound that serves as the starting substrate for the three terminal pathways of aromatic amino acid biosynthesis. This reaction introduces a second double bond into the aromatic ring system.</text>
</comment>
<comment type="catalytic activity">
    <reaction evidence="1">
        <text>5-O-(1-carboxyvinyl)-3-phosphoshikimate = chorismate + phosphate</text>
        <dbReference type="Rhea" id="RHEA:21020"/>
        <dbReference type="ChEBI" id="CHEBI:29748"/>
        <dbReference type="ChEBI" id="CHEBI:43474"/>
        <dbReference type="ChEBI" id="CHEBI:57701"/>
        <dbReference type="EC" id="4.2.3.5"/>
    </reaction>
</comment>
<comment type="cofactor">
    <cofactor evidence="1">
        <name>FMNH2</name>
        <dbReference type="ChEBI" id="CHEBI:57618"/>
    </cofactor>
    <text evidence="1">Reduced FMN (FMNH(2)).</text>
</comment>
<comment type="pathway">
    <text evidence="1">Metabolic intermediate biosynthesis; chorismate biosynthesis; chorismate from D-erythrose 4-phosphate and phosphoenolpyruvate: step 7/7.</text>
</comment>
<comment type="subunit">
    <text evidence="1">Homotetramer.</text>
</comment>
<comment type="similarity">
    <text evidence="1">Belongs to the chorismate synthase family.</text>
</comment>
<sequence>MLRWTTAGESHGRALVAVLEGMVAGVSLTTEDIGAQLRRRRLGYGRGARMKFEQDEITMLGGVRHGVTLGGPIAIQIGNTEWPKWETVMAADPVDPAELAEIARNAPLTRPRPGHADYAGMLKYGFDDARPVLERASARETAARVAAGTVARAFLRQALGVEVVSHVISIGASTPYDGPPPQPADLTAIDDSPVRAFDEAAEKSMIAEIEAAKRDGDTLGGVVEVVVSGLPVGLGSFTSGDNRLDSQLAAAVMGIQAIKGVEIGDGFETARRRGSVAHDEIYPGPDGVVRSTNRAGGLEGGMTNGQPLRVRAAMKPISTVPRALATVDMTTGDEAVAIHQRSDVCAVPAAGVVVETMVALVLARAALQKFGGDSLTETRTNVESYLRAVAAREPATAQRAQASG</sequence>
<organism>
    <name type="scientific">Mycobacterium sp. (strain MCS)</name>
    <dbReference type="NCBI Taxonomy" id="164756"/>
    <lineage>
        <taxon>Bacteria</taxon>
        <taxon>Bacillati</taxon>
        <taxon>Actinomycetota</taxon>
        <taxon>Actinomycetes</taxon>
        <taxon>Mycobacteriales</taxon>
        <taxon>Mycobacteriaceae</taxon>
        <taxon>Mycobacterium</taxon>
    </lineage>
</organism>
<keyword id="KW-0028">Amino-acid biosynthesis</keyword>
<keyword id="KW-0057">Aromatic amino acid biosynthesis</keyword>
<keyword id="KW-0274">FAD</keyword>
<keyword id="KW-0285">Flavoprotein</keyword>
<keyword id="KW-0288">FMN</keyword>
<keyword id="KW-0456">Lyase</keyword>
<keyword id="KW-0521">NADP</keyword>
<proteinExistence type="inferred from homology"/>
<protein>
    <recommendedName>
        <fullName evidence="1">Chorismate synthase</fullName>
        <shortName evidence="1">CS</shortName>
        <ecNumber evidence="1">4.2.3.5</ecNumber>
    </recommendedName>
    <alternativeName>
        <fullName evidence="1">5-enolpyruvylshikimate-3-phosphate phospholyase</fullName>
    </alternativeName>
</protein>
<feature type="chain" id="PRO_0000322413" description="Chorismate synthase">
    <location>
        <begin position="1"/>
        <end position="404"/>
    </location>
</feature>
<feature type="binding site" evidence="1">
    <location>
        <position position="40"/>
    </location>
    <ligand>
        <name>NADP(+)</name>
        <dbReference type="ChEBI" id="CHEBI:58349"/>
    </ligand>
</feature>
<feature type="binding site" evidence="1">
    <location>
        <position position="46"/>
    </location>
    <ligand>
        <name>NADP(+)</name>
        <dbReference type="ChEBI" id="CHEBI:58349"/>
    </ligand>
</feature>
<feature type="binding site" evidence="1">
    <location>
        <begin position="135"/>
        <end position="137"/>
    </location>
    <ligand>
        <name>FMN</name>
        <dbReference type="ChEBI" id="CHEBI:58210"/>
    </ligand>
</feature>
<feature type="binding site" evidence="1">
    <location>
        <begin position="256"/>
        <end position="257"/>
    </location>
    <ligand>
        <name>FMN</name>
        <dbReference type="ChEBI" id="CHEBI:58210"/>
    </ligand>
</feature>
<feature type="binding site" evidence="1">
    <location>
        <position position="300"/>
    </location>
    <ligand>
        <name>FMN</name>
        <dbReference type="ChEBI" id="CHEBI:58210"/>
    </ligand>
</feature>
<feature type="binding site" evidence="1">
    <location>
        <begin position="315"/>
        <end position="319"/>
    </location>
    <ligand>
        <name>FMN</name>
        <dbReference type="ChEBI" id="CHEBI:58210"/>
    </ligand>
</feature>
<feature type="binding site" evidence="1">
    <location>
        <position position="341"/>
    </location>
    <ligand>
        <name>FMN</name>
        <dbReference type="ChEBI" id="CHEBI:58210"/>
    </ligand>
</feature>
<accession>Q1B9H4</accession>
<name>AROC_MYCSS</name>
<gene>
    <name evidence="1" type="primary">aroC</name>
    <name type="ordered locus">Mmcs_2352</name>
</gene>
<dbReference type="EC" id="4.2.3.5" evidence="1"/>
<dbReference type="EMBL" id="CP000384">
    <property type="protein sequence ID" value="ABG08460.1"/>
    <property type="molecule type" value="Genomic_DNA"/>
</dbReference>
<dbReference type="SMR" id="Q1B9H4"/>
<dbReference type="KEGG" id="mmc:Mmcs_2352"/>
<dbReference type="HOGENOM" id="CLU_034547_2_0_11"/>
<dbReference type="BioCyc" id="MSP164756:G1G6O-2404-MONOMER"/>
<dbReference type="UniPathway" id="UPA00053">
    <property type="reaction ID" value="UER00090"/>
</dbReference>
<dbReference type="GO" id="GO:0005829">
    <property type="term" value="C:cytosol"/>
    <property type="evidence" value="ECO:0007669"/>
    <property type="project" value="TreeGrafter"/>
</dbReference>
<dbReference type="GO" id="GO:0004107">
    <property type="term" value="F:chorismate synthase activity"/>
    <property type="evidence" value="ECO:0007669"/>
    <property type="project" value="UniProtKB-UniRule"/>
</dbReference>
<dbReference type="GO" id="GO:0010181">
    <property type="term" value="F:FMN binding"/>
    <property type="evidence" value="ECO:0007669"/>
    <property type="project" value="TreeGrafter"/>
</dbReference>
<dbReference type="GO" id="GO:0008652">
    <property type="term" value="P:amino acid biosynthetic process"/>
    <property type="evidence" value="ECO:0007669"/>
    <property type="project" value="UniProtKB-KW"/>
</dbReference>
<dbReference type="GO" id="GO:0009073">
    <property type="term" value="P:aromatic amino acid family biosynthetic process"/>
    <property type="evidence" value="ECO:0007669"/>
    <property type="project" value="UniProtKB-KW"/>
</dbReference>
<dbReference type="GO" id="GO:0009423">
    <property type="term" value="P:chorismate biosynthetic process"/>
    <property type="evidence" value="ECO:0007669"/>
    <property type="project" value="UniProtKB-UniRule"/>
</dbReference>
<dbReference type="CDD" id="cd07304">
    <property type="entry name" value="Chorismate_synthase"/>
    <property type="match status" value="1"/>
</dbReference>
<dbReference type="FunFam" id="3.60.150.10:FF:000002">
    <property type="entry name" value="Chorismate synthase"/>
    <property type="match status" value="1"/>
</dbReference>
<dbReference type="Gene3D" id="3.60.150.10">
    <property type="entry name" value="Chorismate synthase AroC"/>
    <property type="match status" value="1"/>
</dbReference>
<dbReference type="HAMAP" id="MF_00300">
    <property type="entry name" value="Chorismate_synth"/>
    <property type="match status" value="1"/>
</dbReference>
<dbReference type="InterPro" id="IPR000453">
    <property type="entry name" value="Chorismate_synth"/>
</dbReference>
<dbReference type="InterPro" id="IPR035904">
    <property type="entry name" value="Chorismate_synth_AroC_sf"/>
</dbReference>
<dbReference type="InterPro" id="IPR020541">
    <property type="entry name" value="Chorismate_synthase_CS"/>
</dbReference>
<dbReference type="NCBIfam" id="TIGR00033">
    <property type="entry name" value="aroC"/>
    <property type="match status" value="1"/>
</dbReference>
<dbReference type="NCBIfam" id="NF003793">
    <property type="entry name" value="PRK05382.1"/>
    <property type="match status" value="1"/>
</dbReference>
<dbReference type="PANTHER" id="PTHR21085">
    <property type="entry name" value="CHORISMATE SYNTHASE"/>
    <property type="match status" value="1"/>
</dbReference>
<dbReference type="PANTHER" id="PTHR21085:SF0">
    <property type="entry name" value="CHORISMATE SYNTHASE"/>
    <property type="match status" value="1"/>
</dbReference>
<dbReference type="Pfam" id="PF01264">
    <property type="entry name" value="Chorismate_synt"/>
    <property type="match status" value="1"/>
</dbReference>
<dbReference type="PIRSF" id="PIRSF001456">
    <property type="entry name" value="Chorismate_synth"/>
    <property type="match status" value="1"/>
</dbReference>
<dbReference type="SUPFAM" id="SSF103263">
    <property type="entry name" value="Chorismate synthase, AroC"/>
    <property type="match status" value="1"/>
</dbReference>
<dbReference type="PROSITE" id="PS00787">
    <property type="entry name" value="CHORISMATE_SYNTHASE_1"/>
    <property type="match status" value="1"/>
</dbReference>
<dbReference type="PROSITE" id="PS00788">
    <property type="entry name" value="CHORISMATE_SYNTHASE_2"/>
    <property type="match status" value="1"/>
</dbReference>
<dbReference type="PROSITE" id="PS00789">
    <property type="entry name" value="CHORISMATE_SYNTHASE_3"/>
    <property type="match status" value="1"/>
</dbReference>